<comment type="function">
    <text evidence="2">Component of the cytochrome c oxidase, the last enzyme in the mitochondrial electron transport chain which drives oxidative phosphorylation. The respiratory chain contains 3 multisubunit complexes succinate dehydrogenase (complex II, CII), ubiquinol-cytochrome c oxidoreductase (cytochrome b-c1 complex, complex III, CIII) and cytochrome c oxidase (complex IV, CIV), that cooperate to transfer electrons derived from NADH and succinate to molecular oxygen, creating an electrochemical gradient over the inner membrane that drives transmembrane transport and the ATP synthase. Cytochrome c oxidase is the component of the respiratory chain that catalyzes the reduction of oxygen to water. Electrons originating from reduced cytochrome c in the intermembrane space (IMS) are transferred via the dinuclear copper A center (CU(A)) of subunit 2 and heme A of subunit 1 to the active site in subunit 1, a binuclear center (BNC) formed by heme A3 and copper B (CU(B)). The BNC reduces molecular oxygen to 2 water molecules using 4 electrons from cytochrome c in the IMS and 4 protons from the mitochondrial matrix.</text>
</comment>
<comment type="pathway">
    <text evidence="2">Energy metabolism; oxidative phosphorylation.</text>
</comment>
<comment type="subunit">
    <text evidence="1">Component of the cytochrome c oxidase (complex IV, CIV), a multisubunit enzyme composed of 14 subunits. The complex is composed of a catalytic core of 3 subunits MT-CO1, MT-CO2 and MT-CO3, encoded in the mitochondrial DNA, and 11 supernumerary subunits COX4I, COX5A, COX5B, COX6A, COX6B, COX6C, COX7A, COX7B, COX7C, COX8 and NDUFA4, which are encoded in the nuclear genome. The complex exists as a monomer or a dimer and forms supercomplexes (SCs) in the inner mitochondrial membrane with NADH-ubiquinone oxidoreductase (complex I, CI) and ubiquinol-cytochrome c oxidoreductase (cytochrome b-c1 complex, complex III, CIII), resulting in different assemblies (supercomplex SCI(1)III(2)IV(1) and megacomplex MCI(2)III(2)IV(2)).</text>
</comment>
<comment type="subcellular location">
    <subcellularLocation>
        <location evidence="1">Mitochondrion inner membrane</location>
        <topology evidence="1">Single-pass membrane protein</topology>
    </subcellularLocation>
</comment>
<comment type="similarity">
    <text evidence="3">Belongs to the cytochrome c oxidase VIIa family.</text>
</comment>
<sequence>VDNMVPEKQKLFQAXNGIPVHLF</sequence>
<proteinExistence type="evidence at protein level"/>
<reference key="1">
    <citation type="journal article" date="1994" name="Eur. J. Biochem.">
        <title>Identification of tissue-specific isoforms for subunits Vb and VIIa of cytochrome c oxidase isolated from rainbow trout.</title>
        <authorList>
            <person name="Freund R."/>
            <person name="Kadenbach B."/>
        </authorList>
    </citation>
    <scope>PROTEIN SEQUENCE</scope>
    <source>
        <tissue>Liver</tissue>
    </source>
</reference>
<keyword id="KW-0903">Direct protein sequencing</keyword>
<keyword id="KW-0472">Membrane</keyword>
<keyword id="KW-0496">Mitochondrion</keyword>
<keyword id="KW-0999">Mitochondrion inner membrane</keyword>
<keyword id="KW-0560">Oxidoreductase</keyword>
<keyword id="KW-0812">Transmembrane</keyword>
<keyword id="KW-1133">Transmembrane helix</keyword>
<name>CX7A1_ONCMY</name>
<feature type="chain" id="PRO_0000221002" description="Cytochrome c oxidase subunit 7A-liver, mitochondrial">
    <location>
        <begin position="1"/>
        <end position="23" status="greater than"/>
    </location>
</feature>
<feature type="non-terminal residue">
    <location>
        <position position="23"/>
    </location>
</feature>
<dbReference type="PIR" id="S43632">
    <property type="entry name" value="S43632"/>
</dbReference>
<dbReference type="UniPathway" id="UPA00705"/>
<dbReference type="Proteomes" id="UP000694395">
    <property type="component" value="Unplaced"/>
</dbReference>
<dbReference type="GO" id="GO:0005743">
    <property type="term" value="C:mitochondrial inner membrane"/>
    <property type="evidence" value="ECO:0007669"/>
    <property type="project" value="UniProtKB-SubCell"/>
</dbReference>
<dbReference type="GO" id="GO:0045277">
    <property type="term" value="C:respiratory chain complex IV"/>
    <property type="evidence" value="ECO:0007669"/>
    <property type="project" value="InterPro"/>
</dbReference>
<dbReference type="GO" id="GO:0016491">
    <property type="term" value="F:oxidoreductase activity"/>
    <property type="evidence" value="ECO:0007669"/>
    <property type="project" value="UniProtKB-KW"/>
</dbReference>
<dbReference type="GO" id="GO:0006123">
    <property type="term" value="P:mitochondrial electron transport, cytochrome c to oxygen"/>
    <property type="evidence" value="ECO:0007669"/>
    <property type="project" value="InterPro"/>
</dbReference>
<dbReference type="Gene3D" id="4.10.91.10">
    <property type="entry name" value="Cytochrome c oxidase, subunit VIIa"/>
    <property type="match status" value="1"/>
</dbReference>
<dbReference type="InterPro" id="IPR039297">
    <property type="entry name" value="COX7a"/>
</dbReference>
<dbReference type="InterPro" id="IPR036539">
    <property type="entry name" value="Cyt_c_oxidase_su7a_sf"/>
</dbReference>
<dbReference type="Pfam" id="PF02238">
    <property type="entry name" value="COX7a"/>
    <property type="match status" value="1"/>
</dbReference>
<dbReference type="SUPFAM" id="SSF81419">
    <property type="entry name" value="Mitochondrial cytochrome c oxidase subunit VIIa"/>
    <property type="match status" value="1"/>
</dbReference>
<evidence type="ECO:0000250" key="1">
    <source>
        <dbReference type="UniProtKB" id="P07470"/>
    </source>
</evidence>
<evidence type="ECO:0000250" key="2">
    <source>
        <dbReference type="UniProtKB" id="P10174"/>
    </source>
</evidence>
<evidence type="ECO:0000305" key="3"/>
<accession>P80333</accession>
<protein>
    <recommendedName>
        <fullName>Cytochrome c oxidase subunit 7A-liver, mitochondrial</fullName>
    </recommendedName>
    <alternativeName>
        <fullName>Cytochrome c oxidase subunit VIIa-liver</fullName>
    </alternativeName>
</protein>
<organism>
    <name type="scientific">Oncorhynchus mykiss</name>
    <name type="common">Rainbow trout</name>
    <name type="synonym">Salmo gairdneri</name>
    <dbReference type="NCBI Taxonomy" id="8022"/>
    <lineage>
        <taxon>Eukaryota</taxon>
        <taxon>Metazoa</taxon>
        <taxon>Chordata</taxon>
        <taxon>Craniata</taxon>
        <taxon>Vertebrata</taxon>
        <taxon>Euteleostomi</taxon>
        <taxon>Actinopterygii</taxon>
        <taxon>Neopterygii</taxon>
        <taxon>Teleostei</taxon>
        <taxon>Protacanthopterygii</taxon>
        <taxon>Salmoniformes</taxon>
        <taxon>Salmonidae</taxon>
        <taxon>Salmoninae</taxon>
        <taxon>Oncorhynchus</taxon>
    </lineage>
</organism>